<accession>A6VQ42</accession>
<reference key="1">
    <citation type="journal article" date="2010" name="BMC Genomics">
        <title>A genomic perspective on the potential of Actinobacillus succinogenes for industrial succinate production.</title>
        <authorList>
            <person name="McKinlay J.B."/>
            <person name="Laivenieks M."/>
            <person name="Schindler B.D."/>
            <person name="McKinlay A.A."/>
            <person name="Siddaramappa S."/>
            <person name="Challacombe J.F."/>
            <person name="Lowry S.R."/>
            <person name="Clum A."/>
            <person name="Lapidus A.L."/>
            <person name="Burkhart K.B."/>
            <person name="Harkins V."/>
            <person name="Vieille C."/>
        </authorList>
    </citation>
    <scope>NUCLEOTIDE SEQUENCE [LARGE SCALE GENOMIC DNA]</scope>
    <source>
        <strain>ATCC 55618 / DSM 22257 / CCUG 43843 / 130Z</strain>
    </source>
</reference>
<name>RNFC_ACTSZ</name>
<gene>
    <name evidence="1" type="primary">rnfC</name>
    <name type="ordered locus">Asuc_1737</name>
</gene>
<evidence type="ECO:0000255" key="1">
    <source>
        <dbReference type="HAMAP-Rule" id="MF_00461"/>
    </source>
</evidence>
<evidence type="ECO:0000256" key="2">
    <source>
        <dbReference type="SAM" id="MobiDB-lite"/>
    </source>
</evidence>
<dbReference type="EC" id="7.-.-.-" evidence="1"/>
<dbReference type="EMBL" id="CP000746">
    <property type="protein sequence ID" value="ABR75089.1"/>
    <property type="molecule type" value="Genomic_DNA"/>
</dbReference>
<dbReference type="RefSeq" id="WP_012073466.1">
    <property type="nucleotide sequence ID" value="NC_009655.1"/>
</dbReference>
<dbReference type="SMR" id="A6VQ42"/>
<dbReference type="STRING" id="339671.Asuc_1737"/>
<dbReference type="KEGG" id="asu:Asuc_1737"/>
<dbReference type="eggNOG" id="COG4656">
    <property type="taxonomic scope" value="Bacteria"/>
</dbReference>
<dbReference type="HOGENOM" id="CLU_010808_2_1_6"/>
<dbReference type="OrthoDB" id="9767754at2"/>
<dbReference type="Proteomes" id="UP000001114">
    <property type="component" value="Chromosome"/>
</dbReference>
<dbReference type="GO" id="GO:0005886">
    <property type="term" value="C:plasma membrane"/>
    <property type="evidence" value="ECO:0007669"/>
    <property type="project" value="UniProtKB-SubCell"/>
</dbReference>
<dbReference type="GO" id="GO:0051539">
    <property type="term" value="F:4 iron, 4 sulfur cluster binding"/>
    <property type="evidence" value="ECO:0007669"/>
    <property type="project" value="UniProtKB-KW"/>
</dbReference>
<dbReference type="GO" id="GO:0009055">
    <property type="term" value="F:electron transfer activity"/>
    <property type="evidence" value="ECO:0007669"/>
    <property type="project" value="InterPro"/>
</dbReference>
<dbReference type="GO" id="GO:0046872">
    <property type="term" value="F:metal ion binding"/>
    <property type="evidence" value="ECO:0007669"/>
    <property type="project" value="UniProtKB-KW"/>
</dbReference>
<dbReference type="GO" id="GO:0022900">
    <property type="term" value="P:electron transport chain"/>
    <property type="evidence" value="ECO:0007669"/>
    <property type="project" value="UniProtKB-UniRule"/>
</dbReference>
<dbReference type="Gene3D" id="3.30.70.20">
    <property type="match status" value="1"/>
</dbReference>
<dbReference type="Gene3D" id="3.40.50.11540">
    <property type="entry name" value="NADH-ubiquinone oxidoreductase 51kDa subunit"/>
    <property type="match status" value="1"/>
</dbReference>
<dbReference type="HAMAP" id="MF_00461">
    <property type="entry name" value="RsxC_RnfC"/>
    <property type="match status" value="1"/>
</dbReference>
<dbReference type="InterPro" id="IPR017896">
    <property type="entry name" value="4Fe4S_Fe-S-bd"/>
</dbReference>
<dbReference type="InterPro" id="IPR017900">
    <property type="entry name" value="4Fe4S_Fe_S_CS"/>
</dbReference>
<dbReference type="InterPro" id="IPR010208">
    <property type="entry name" value="Ion_transpt_RnfC/RsxC"/>
</dbReference>
<dbReference type="InterPro" id="IPR011538">
    <property type="entry name" value="Nuo51_FMN-bd"/>
</dbReference>
<dbReference type="InterPro" id="IPR037225">
    <property type="entry name" value="Nuo51_FMN-bd_sf"/>
</dbReference>
<dbReference type="InterPro" id="IPR026902">
    <property type="entry name" value="RnfC_N"/>
</dbReference>
<dbReference type="NCBIfam" id="NF003454">
    <property type="entry name" value="PRK05035.1"/>
    <property type="match status" value="1"/>
</dbReference>
<dbReference type="NCBIfam" id="TIGR01945">
    <property type="entry name" value="rnfC"/>
    <property type="match status" value="1"/>
</dbReference>
<dbReference type="PANTHER" id="PTHR43034">
    <property type="entry name" value="ION-TRANSLOCATING OXIDOREDUCTASE COMPLEX SUBUNIT C"/>
    <property type="match status" value="1"/>
</dbReference>
<dbReference type="PANTHER" id="PTHR43034:SF2">
    <property type="entry name" value="ION-TRANSLOCATING OXIDOREDUCTASE COMPLEX SUBUNIT C"/>
    <property type="match status" value="1"/>
</dbReference>
<dbReference type="Pfam" id="PF01512">
    <property type="entry name" value="Complex1_51K"/>
    <property type="match status" value="1"/>
</dbReference>
<dbReference type="Pfam" id="PF12838">
    <property type="entry name" value="Fer4_7"/>
    <property type="match status" value="1"/>
</dbReference>
<dbReference type="Pfam" id="PF13375">
    <property type="entry name" value="RnfC_N"/>
    <property type="match status" value="1"/>
</dbReference>
<dbReference type="SUPFAM" id="SSF46548">
    <property type="entry name" value="alpha-helical ferredoxin"/>
    <property type="match status" value="1"/>
</dbReference>
<dbReference type="SUPFAM" id="SSF142019">
    <property type="entry name" value="Nqo1 FMN-binding domain-like"/>
    <property type="match status" value="1"/>
</dbReference>
<dbReference type="PROSITE" id="PS00198">
    <property type="entry name" value="4FE4S_FER_1"/>
    <property type="match status" value="2"/>
</dbReference>
<dbReference type="PROSITE" id="PS51379">
    <property type="entry name" value="4FE4S_FER_2"/>
    <property type="match status" value="2"/>
</dbReference>
<protein>
    <recommendedName>
        <fullName evidence="1">Ion-translocating oxidoreductase complex subunit C</fullName>
        <ecNumber evidence="1">7.-.-.-</ecNumber>
    </recommendedName>
    <alternativeName>
        <fullName evidence="1">Rnf electron transport complex subunit C</fullName>
    </alternativeName>
</protein>
<feature type="chain" id="PRO_1000072385" description="Ion-translocating oxidoreductase complex subunit C">
    <location>
        <begin position="1"/>
        <end position="703"/>
    </location>
</feature>
<feature type="domain" description="4Fe-4S ferredoxin-type 1" evidence="1">
    <location>
        <begin position="369"/>
        <end position="398"/>
    </location>
</feature>
<feature type="domain" description="4Fe-4S ferredoxin-type 2" evidence="1">
    <location>
        <begin position="408"/>
        <end position="437"/>
    </location>
</feature>
<feature type="region of interest" description="Disordered" evidence="2">
    <location>
        <begin position="467"/>
        <end position="542"/>
    </location>
</feature>
<feature type="region of interest" description="Disordered" evidence="2">
    <location>
        <begin position="555"/>
        <end position="680"/>
    </location>
</feature>
<feature type="compositionally biased region" description="Basic and acidic residues" evidence="2">
    <location>
        <begin position="485"/>
        <end position="497"/>
    </location>
</feature>
<feature type="compositionally biased region" description="Low complexity" evidence="2">
    <location>
        <begin position="559"/>
        <end position="577"/>
    </location>
</feature>
<feature type="compositionally biased region" description="Polar residues" evidence="2">
    <location>
        <begin position="578"/>
        <end position="592"/>
    </location>
</feature>
<feature type="compositionally biased region" description="Low complexity" evidence="2">
    <location>
        <begin position="598"/>
        <end position="629"/>
    </location>
</feature>
<feature type="compositionally biased region" description="Low complexity" evidence="2">
    <location>
        <begin position="641"/>
        <end position="669"/>
    </location>
</feature>
<feature type="binding site" evidence="1">
    <location>
        <position position="378"/>
    </location>
    <ligand>
        <name>[4Fe-4S] cluster</name>
        <dbReference type="ChEBI" id="CHEBI:49883"/>
        <label>1</label>
    </ligand>
</feature>
<feature type="binding site" evidence="1">
    <location>
        <position position="381"/>
    </location>
    <ligand>
        <name>[4Fe-4S] cluster</name>
        <dbReference type="ChEBI" id="CHEBI:49883"/>
        <label>1</label>
    </ligand>
</feature>
<feature type="binding site" evidence="1">
    <location>
        <position position="384"/>
    </location>
    <ligand>
        <name>[4Fe-4S] cluster</name>
        <dbReference type="ChEBI" id="CHEBI:49883"/>
        <label>1</label>
    </ligand>
</feature>
<feature type="binding site" evidence="1">
    <location>
        <position position="388"/>
    </location>
    <ligand>
        <name>[4Fe-4S] cluster</name>
        <dbReference type="ChEBI" id="CHEBI:49883"/>
        <label>2</label>
    </ligand>
</feature>
<feature type="binding site" evidence="1">
    <location>
        <position position="417"/>
    </location>
    <ligand>
        <name>[4Fe-4S] cluster</name>
        <dbReference type="ChEBI" id="CHEBI:49883"/>
        <label>2</label>
    </ligand>
</feature>
<feature type="binding site" evidence="1">
    <location>
        <position position="420"/>
    </location>
    <ligand>
        <name>[4Fe-4S] cluster</name>
        <dbReference type="ChEBI" id="CHEBI:49883"/>
        <label>2</label>
    </ligand>
</feature>
<feature type="binding site" evidence="1">
    <location>
        <position position="423"/>
    </location>
    <ligand>
        <name>[4Fe-4S] cluster</name>
        <dbReference type="ChEBI" id="CHEBI:49883"/>
        <label>2</label>
    </ligand>
</feature>
<feature type="binding site" evidence="1">
    <location>
        <position position="427"/>
    </location>
    <ligand>
        <name>[4Fe-4S] cluster</name>
        <dbReference type="ChEBI" id="CHEBI:49883"/>
        <label>1</label>
    </ligand>
</feature>
<keyword id="KW-0004">4Fe-4S</keyword>
<keyword id="KW-0997">Cell inner membrane</keyword>
<keyword id="KW-1003">Cell membrane</keyword>
<keyword id="KW-0249">Electron transport</keyword>
<keyword id="KW-0408">Iron</keyword>
<keyword id="KW-0411">Iron-sulfur</keyword>
<keyword id="KW-0472">Membrane</keyword>
<keyword id="KW-0479">Metal-binding</keyword>
<keyword id="KW-1185">Reference proteome</keyword>
<keyword id="KW-0677">Repeat</keyword>
<keyword id="KW-1278">Translocase</keyword>
<keyword id="KW-0813">Transport</keyword>
<comment type="function">
    <text evidence="1">Part of a membrane-bound complex that couples electron transfer with translocation of ions across the membrane.</text>
</comment>
<comment type="cofactor">
    <cofactor evidence="1">
        <name>[4Fe-4S] cluster</name>
        <dbReference type="ChEBI" id="CHEBI:49883"/>
    </cofactor>
    <text evidence="1">Binds 2 [4Fe-4S] clusters per subunit.</text>
</comment>
<comment type="subunit">
    <text evidence="1">The complex is composed of six subunits: RnfA, RnfB, RnfC, RnfD, RnfE and RnfG.</text>
</comment>
<comment type="subcellular location">
    <subcellularLocation>
        <location evidence="1">Cell inner membrane</location>
        <topology evidence="1">Peripheral membrane protein</topology>
    </subcellularLocation>
</comment>
<comment type="similarity">
    <text evidence="1">Belongs to the 4Fe4S bacterial-type ferredoxin family. RnfC subfamily.</text>
</comment>
<organism>
    <name type="scientific">Actinobacillus succinogenes (strain ATCC 55618 / DSM 22257 / CCUG 43843 / 130Z)</name>
    <dbReference type="NCBI Taxonomy" id="339671"/>
    <lineage>
        <taxon>Bacteria</taxon>
        <taxon>Pseudomonadati</taxon>
        <taxon>Pseudomonadota</taxon>
        <taxon>Gammaproteobacteria</taxon>
        <taxon>Pasteurellales</taxon>
        <taxon>Pasteurellaceae</taxon>
        <taxon>Actinobacillus</taxon>
    </lineage>
</organism>
<proteinExistence type="inferred from homology"/>
<sequence length="703" mass="76026">MTDVLTRYNSGKLWDFDGGIHPPEMKSQSNSTPISTALLAEDYYVPVKQHAGNAGNLLVKEGDYVLKGQPLTLGDGLRVLPVHAPTSGTVVAIEPHIAAHPSGLSELAVHIHADGKDQWRPQNPTEDYFTHTPERLIEKIYRAGVAGLGGAVFPTGAKVDAALGKVKLLIINGAECEPYITCDDRLMRDYAAEIIEGVRILRYILRPEKVVIAIEDNKPEAVNALRTSLQGANDMDIRVIPTKYPSGAAKQLIYVLTGMEVPHGQRSSSIGVLMQNVGTAFAVKRAVINDEPLIERVVTLTGDKIPHKGNQWVRLGTPIDFILKHVGYQPDNRFPVFVGGPMMGLIVPDLRAPITKTANCLLAPDHFEYDPQATEQACIRCSACSDACPVHLMPQQMYWYARAEDHEKSNQYQLMDCIECGLCAYVCPSHIPLIQYFRQEKAKIWDIEAKARKSEEAKIRFEARQARLEREEQARKARSQRAAAARREELAANKGEDPVQAALARLKAKKAGEAPETGGSAQGAPHIKTIRTEKGQSVPDNSEITALRRARRLARQQTNGNSPVSSASNSDSATISADNTHSTPKTAQNQTAPDPKKAAVAVAIARAKAKKAAQTTTGETVTENVTEKTAQNPTAPDPKKAAVAAAIARAKAKKAAQATTGETATEKTAQNPTAPDPKKAAVAAAIARAKAKKAAMLAESEKK</sequence>